<sequence length="226" mass="25929">MEPGFWHSKWDTQQIGFHQNEVNPLLIKYWPRLNLNNLVNTSVFVPLCGKTLDICFLAELGHEVIGCELNETAVEHFFTENDLSYSTSRVGELQKFATEQVSIYQGDLFSLSHEALSSQEHRTIGAFYDRAALIAWPEEMRQDYVQKLAALIPPKSIGLLVTLDYPQEALKGPPFAVSNDWIMANMAEFFEVEILSCEDVLSENPRFIKKEVPWLTESVYRLIRRG</sequence>
<organism>
    <name type="scientific">Shewanella sediminis (strain HAW-EB3)</name>
    <dbReference type="NCBI Taxonomy" id="425104"/>
    <lineage>
        <taxon>Bacteria</taxon>
        <taxon>Pseudomonadati</taxon>
        <taxon>Pseudomonadota</taxon>
        <taxon>Gammaproteobacteria</taxon>
        <taxon>Alteromonadales</taxon>
        <taxon>Shewanellaceae</taxon>
        <taxon>Shewanella</taxon>
    </lineage>
</organism>
<keyword id="KW-0963">Cytoplasm</keyword>
<keyword id="KW-0489">Methyltransferase</keyword>
<keyword id="KW-1185">Reference proteome</keyword>
<keyword id="KW-0949">S-adenosyl-L-methionine</keyword>
<keyword id="KW-0808">Transferase</keyword>
<feature type="chain" id="PRO_1000083765" description="Thiopurine S-methyltransferase">
    <location>
        <begin position="1"/>
        <end position="226"/>
    </location>
</feature>
<feature type="binding site" evidence="1">
    <location>
        <position position="10"/>
    </location>
    <ligand>
        <name>S-adenosyl-L-methionine</name>
        <dbReference type="ChEBI" id="CHEBI:59789"/>
    </ligand>
</feature>
<feature type="binding site" evidence="1">
    <location>
        <position position="47"/>
    </location>
    <ligand>
        <name>S-adenosyl-L-methionine</name>
        <dbReference type="ChEBI" id="CHEBI:59789"/>
    </ligand>
</feature>
<feature type="binding site" evidence="1">
    <location>
        <position position="68"/>
    </location>
    <ligand>
        <name>S-adenosyl-L-methionine</name>
        <dbReference type="ChEBI" id="CHEBI:59789"/>
    </ligand>
</feature>
<feature type="binding site" evidence="1">
    <location>
        <position position="130"/>
    </location>
    <ligand>
        <name>S-adenosyl-L-methionine</name>
        <dbReference type="ChEBI" id="CHEBI:59789"/>
    </ligand>
</feature>
<dbReference type="EC" id="2.1.1.67" evidence="1"/>
<dbReference type="EMBL" id="CP000821">
    <property type="protein sequence ID" value="ABV38614.1"/>
    <property type="molecule type" value="Genomic_DNA"/>
</dbReference>
<dbReference type="RefSeq" id="WP_012144344.1">
    <property type="nucleotide sequence ID" value="NC_009831.1"/>
</dbReference>
<dbReference type="SMR" id="A8G0J1"/>
<dbReference type="KEGG" id="sse:Ssed_4010"/>
<dbReference type="eggNOG" id="COG0500">
    <property type="taxonomic scope" value="Bacteria"/>
</dbReference>
<dbReference type="HOGENOM" id="CLU_085515_1_0_6"/>
<dbReference type="OrthoDB" id="9778208at2"/>
<dbReference type="Proteomes" id="UP000002015">
    <property type="component" value="Chromosome"/>
</dbReference>
<dbReference type="GO" id="GO:0005737">
    <property type="term" value="C:cytoplasm"/>
    <property type="evidence" value="ECO:0007669"/>
    <property type="project" value="UniProtKB-SubCell"/>
</dbReference>
<dbReference type="GO" id="GO:0008119">
    <property type="term" value="F:thiopurine S-methyltransferase activity"/>
    <property type="evidence" value="ECO:0007669"/>
    <property type="project" value="UniProtKB-UniRule"/>
</dbReference>
<dbReference type="GO" id="GO:0032259">
    <property type="term" value="P:methylation"/>
    <property type="evidence" value="ECO:0007669"/>
    <property type="project" value="UniProtKB-KW"/>
</dbReference>
<dbReference type="GO" id="GO:0010038">
    <property type="term" value="P:response to metal ion"/>
    <property type="evidence" value="ECO:0007669"/>
    <property type="project" value="InterPro"/>
</dbReference>
<dbReference type="FunFam" id="3.40.50.150:FF:000101">
    <property type="entry name" value="Thiopurine S-methyltransferase"/>
    <property type="match status" value="1"/>
</dbReference>
<dbReference type="Gene3D" id="3.40.50.150">
    <property type="entry name" value="Vaccinia Virus protein VP39"/>
    <property type="match status" value="1"/>
</dbReference>
<dbReference type="HAMAP" id="MF_00812">
    <property type="entry name" value="Thiopur_methtran"/>
    <property type="match status" value="1"/>
</dbReference>
<dbReference type="InterPro" id="IPR029063">
    <property type="entry name" value="SAM-dependent_MTases_sf"/>
</dbReference>
<dbReference type="InterPro" id="IPR022474">
    <property type="entry name" value="Thiopur_S-MeTfrase_Se/Te_detox"/>
</dbReference>
<dbReference type="InterPro" id="IPR025835">
    <property type="entry name" value="Thiopurine_S-MeTrfase"/>
</dbReference>
<dbReference type="InterPro" id="IPR008854">
    <property type="entry name" value="TPMT"/>
</dbReference>
<dbReference type="NCBIfam" id="NF009732">
    <property type="entry name" value="PRK13255.1"/>
    <property type="match status" value="1"/>
</dbReference>
<dbReference type="NCBIfam" id="TIGR03840">
    <property type="entry name" value="TMPT_Se_Te"/>
    <property type="match status" value="1"/>
</dbReference>
<dbReference type="PANTHER" id="PTHR10259">
    <property type="entry name" value="THIOPURINE S-METHYLTRANSFERASE"/>
    <property type="match status" value="1"/>
</dbReference>
<dbReference type="PANTHER" id="PTHR10259:SF11">
    <property type="entry name" value="THIOPURINE S-METHYLTRANSFERASE"/>
    <property type="match status" value="1"/>
</dbReference>
<dbReference type="Pfam" id="PF05724">
    <property type="entry name" value="TPMT"/>
    <property type="match status" value="1"/>
</dbReference>
<dbReference type="PIRSF" id="PIRSF023956">
    <property type="entry name" value="Thiopurine_S-methyltransferase"/>
    <property type="match status" value="1"/>
</dbReference>
<dbReference type="SUPFAM" id="SSF53335">
    <property type="entry name" value="S-adenosyl-L-methionine-dependent methyltransferases"/>
    <property type="match status" value="1"/>
</dbReference>
<dbReference type="PROSITE" id="PS51585">
    <property type="entry name" value="SAM_MT_TPMT"/>
    <property type="match status" value="1"/>
</dbReference>
<reference key="1">
    <citation type="submission" date="2007-08" db="EMBL/GenBank/DDBJ databases">
        <title>Complete sequence of Shewanella sediminis HAW-EB3.</title>
        <authorList>
            <consortium name="US DOE Joint Genome Institute"/>
            <person name="Copeland A."/>
            <person name="Lucas S."/>
            <person name="Lapidus A."/>
            <person name="Barry K."/>
            <person name="Glavina del Rio T."/>
            <person name="Dalin E."/>
            <person name="Tice H."/>
            <person name="Pitluck S."/>
            <person name="Chertkov O."/>
            <person name="Brettin T."/>
            <person name="Bruce D."/>
            <person name="Detter J.C."/>
            <person name="Han C."/>
            <person name="Schmutz J."/>
            <person name="Larimer F."/>
            <person name="Land M."/>
            <person name="Hauser L."/>
            <person name="Kyrpides N."/>
            <person name="Kim E."/>
            <person name="Zhao J.-S."/>
            <person name="Richardson P."/>
        </authorList>
    </citation>
    <scope>NUCLEOTIDE SEQUENCE [LARGE SCALE GENOMIC DNA]</scope>
    <source>
        <strain>HAW-EB3</strain>
    </source>
</reference>
<gene>
    <name evidence="1" type="primary">tpm</name>
    <name type="ordered locus">Ssed_4010</name>
</gene>
<evidence type="ECO:0000255" key="1">
    <source>
        <dbReference type="HAMAP-Rule" id="MF_00812"/>
    </source>
</evidence>
<accession>A8G0J1</accession>
<name>TPMT_SHESH</name>
<protein>
    <recommendedName>
        <fullName evidence="1">Thiopurine S-methyltransferase</fullName>
        <ecNumber evidence="1">2.1.1.67</ecNumber>
    </recommendedName>
    <alternativeName>
        <fullName evidence="1">Thiopurine methyltransferase</fullName>
    </alternativeName>
</protein>
<comment type="catalytic activity">
    <reaction evidence="1">
        <text>S-adenosyl-L-methionine + a thiopurine = S-adenosyl-L-homocysteine + a thiopurine S-methylether.</text>
        <dbReference type="EC" id="2.1.1.67"/>
    </reaction>
</comment>
<comment type="subcellular location">
    <subcellularLocation>
        <location evidence="1">Cytoplasm</location>
    </subcellularLocation>
</comment>
<comment type="similarity">
    <text evidence="1">Belongs to the class I-like SAM-binding methyltransferase superfamily. TPMT family.</text>
</comment>
<proteinExistence type="inferred from homology"/>